<comment type="function">
    <text evidence="1">Catalyzes the reversible oxidation of malate to oxaloacetate.</text>
</comment>
<comment type="catalytic activity">
    <reaction evidence="1">
        <text>(S)-malate + NAD(+) = oxaloacetate + NADH + H(+)</text>
        <dbReference type="Rhea" id="RHEA:21432"/>
        <dbReference type="ChEBI" id="CHEBI:15378"/>
        <dbReference type="ChEBI" id="CHEBI:15589"/>
        <dbReference type="ChEBI" id="CHEBI:16452"/>
        <dbReference type="ChEBI" id="CHEBI:57540"/>
        <dbReference type="ChEBI" id="CHEBI:57945"/>
        <dbReference type="EC" id="1.1.1.37"/>
    </reaction>
</comment>
<comment type="similarity">
    <text evidence="1">Belongs to the LDH/MDH superfamily. MDH type 2 family.</text>
</comment>
<dbReference type="EC" id="1.1.1.37" evidence="1"/>
<dbReference type="EMBL" id="CP000869">
    <property type="protein sequence ID" value="ABX18328.1"/>
    <property type="molecule type" value="Genomic_DNA"/>
</dbReference>
<dbReference type="EMBL" id="AP009386">
    <property type="protein sequence ID" value="BAG45722.1"/>
    <property type="molecule type" value="Genomic_DNA"/>
</dbReference>
<dbReference type="RefSeq" id="WP_006404038.1">
    <property type="nucleotide sequence ID" value="NC_010805.1"/>
</dbReference>
<dbReference type="SMR" id="A9AMD5"/>
<dbReference type="STRING" id="395019.BMULJ_03862"/>
<dbReference type="KEGG" id="bmj:BMULJ_03862"/>
<dbReference type="KEGG" id="bmu:Bmul_4651"/>
<dbReference type="eggNOG" id="COG0039">
    <property type="taxonomic scope" value="Bacteria"/>
</dbReference>
<dbReference type="HOGENOM" id="CLU_040727_2_0_4"/>
<dbReference type="Proteomes" id="UP000008815">
    <property type="component" value="Chromosome 2"/>
</dbReference>
<dbReference type="GO" id="GO:0030060">
    <property type="term" value="F:L-malate dehydrogenase (NAD+) activity"/>
    <property type="evidence" value="ECO:0007669"/>
    <property type="project" value="UniProtKB-UniRule"/>
</dbReference>
<dbReference type="GO" id="GO:0006108">
    <property type="term" value="P:malate metabolic process"/>
    <property type="evidence" value="ECO:0007669"/>
    <property type="project" value="InterPro"/>
</dbReference>
<dbReference type="GO" id="GO:0006099">
    <property type="term" value="P:tricarboxylic acid cycle"/>
    <property type="evidence" value="ECO:0007669"/>
    <property type="project" value="UniProtKB-UniRule"/>
</dbReference>
<dbReference type="CDD" id="cd01338">
    <property type="entry name" value="MDH_chloroplast-like"/>
    <property type="match status" value="1"/>
</dbReference>
<dbReference type="FunFam" id="3.40.50.720:FF:000010">
    <property type="entry name" value="Malate dehydrogenase"/>
    <property type="match status" value="1"/>
</dbReference>
<dbReference type="FunFam" id="3.90.110.10:FF:000002">
    <property type="entry name" value="Malate dehydrogenase"/>
    <property type="match status" value="1"/>
</dbReference>
<dbReference type="Gene3D" id="3.90.110.10">
    <property type="entry name" value="Lactate dehydrogenase/glycoside hydrolase, family 4, C-terminal"/>
    <property type="match status" value="1"/>
</dbReference>
<dbReference type="Gene3D" id="3.40.50.720">
    <property type="entry name" value="NAD(P)-binding Rossmann-like Domain"/>
    <property type="match status" value="1"/>
</dbReference>
<dbReference type="HAMAP" id="MF_01517">
    <property type="entry name" value="Malate_dehydrog_2"/>
    <property type="match status" value="1"/>
</dbReference>
<dbReference type="InterPro" id="IPR001557">
    <property type="entry name" value="L-lactate/malate_DH"/>
</dbReference>
<dbReference type="InterPro" id="IPR022383">
    <property type="entry name" value="Lactate/malate_DH_C"/>
</dbReference>
<dbReference type="InterPro" id="IPR001236">
    <property type="entry name" value="Lactate/malate_DH_N"/>
</dbReference>
<dbReference type="InterPro" id="IPR015955">
    <property type="entry name" value="Lactate_DH/Glyco_Ohase_4_C"/>
</dbReference>
<dbReference type="InterPro" id="IPR010945">
    <property type="entry name" value="Malate_DH_type2"/>
</dbReference>
<dbReference type="InterPro" id="IPR036291">
    <property type="entry name" value="NAD(P)-bd_dom_sf"/>
</dbReference>
<dbReference type="NCBIfam" id="TIGR01759">
    <property type="entry name" value="MalateDH-SF1"/>
    <property type="match status" value="1"/>
</dbReference>
<dbReference type="NCBIfam" id="NF003916">
    <property type="entry name" value="PRK05442.1"/>
    <property type="match status" value="1"/>
</dbReference>
<dbReference type="PANTHER" id="PTHR23382">
    <property type="entry name" value="MALATE DEHYDROGENASE"/>
    <property type="match status" value="1"/>
</dbReference>
<dbReference type="Pfam" id="PF02866">
    <property type="entry name" value="Ldh_1_C"/>
    <property type="match status" value="1"/>
</dbReference>
<dbReference type="Pfam" id="PF00056">
    <property type="entry name" value="Ldh_1_N"/>
    <property type="match status" value="1"/>
</dbReference>
<dbReference type="PIRSF" id="PIRSF000102">
    <property type="entry name" value="Lac_mal_DH"/>
    <property type="match status" value="1"/>
</dbReference>
<dbReference type="SUPFAM" id="SSF56327">
    <property type="entry name" value="LDH C-terminal domain-like"/>
    <property type="match status" value="1"/>
</dbReference>
<dbReference type="SUPFAM" id="SSF51735">
    <property type="entry name" value="NAD(P)-binding Rossmann-fold domains"/>
    <property type="match status" value="1"/>
</dbReference>
<keyword id="KW-0520">NAD</keyword>
<keyword id="KW-0560">Oxidoreductase</keyword>
<keyword id="KW-1185">Reference proteome</keyword>
<keyword id="KW-0816">Tricarboxylic acid cycle</keyword>
<gene>
    <name evidence="1" type="primary">mdh</name>
    <name type="ordered locus">Bmul_4651</name>
    <name type="ordered locus">BMULJ_03862</name>
</gene>
<sequence>MAKPAKRVAVTGAAGQIAYSLLFRIANGDLLGKDQPVILQLLDLPQAQAAVKGVVMELDDCAFPLLAGVVITDDPKVAFKDADVALLVGARPRSKGMERKDLLSANAEIFTVQGAALNEVASRDVKVLVVGNPANTNAYIAMKSAPDLPKKNFTAMLRLDHNRALSQLAAKSGKPVASIEKLAVWGNHSPTMYPDFRFATAEGESLLKLINDDEWNRNTFIPTVGKRGAAIIEARGLSSAASAANAAIDHVRDWVLGTNGKWVTMGIPSDGSYGIPEDIIYGVPVTCENGEYKRVEGLEIDAFSREKMDATLAELLEERDGVAHLLKN</sequence>
<name>MDH_BURM1</name>
<proteinExistence type="inferred from homology"/>
<feature type="chain" id="PRO_1000191612" description="Malate dehydrogenase">
    <location>
        <begin position="1"/>
        <end position="328"/>
    </location>
</feature>
<feature type="active site" description="Proton acceptor" evidence="1">
    <location>
        <position position="188"/>
    </location>
</feature>
<feature type="binding site" evidence="1">
    <location>
        <begin position="12"/>
        <end position="18"/>
    </location>
    <ligand>
        <name>NAD(+)</name>
        <dbReference type="ChEBI" id="CHEBI:57540"/>
    </ligand>
</feature>
<feature type="binding site" evidence="1">
    <location>
        <position position="93"/>
    </location>
    <ligand>
        <name>substrate</name>
    </ligand>
</feature>
<feature type="binding site" evidence="1">
    <location>
        <position position="99"/>
    </location>
    <ligand>
        <name>substrate</name>
    </ligand>
</feature>
<feature type="binding site" evidence="1">
    <location>
        <position position="106"/>
    </location>
    <ligand>
        <name>NAD(+)</name>
        <dbReference type="ChEBI" id="CHEBI:57540"/>
    </ligand>
</feature>
<feature type="binding site" evidence="1">
    <location>
        <position position="113"/>
    </location>
    <ligand>
        <name>NAD(+)</name>
        <dbReference type="ChEBI" id="CHEBI:57540"/>
    </ligand>
</feature>
<feature type="binding site" evidence="1">
    <location>
        <begin position="130"/>
        <end position="132"/>
    </location>
    <ligand>
        <name>NAD(+)</name>
        <dbReference type="ChEBI" id="CHEBI:57540"/>
    </ligand>
</feature>
<feature type="binding site" evidence="1">
    <location>
        <position position="132"/>
    </location>
    <ligand>
        <name>substrate</name>
    </ligand>
</feature>
<feature type="binding site" evidence="1">
    <location>
        <position position="163"/>
    </location>
    <ligand>
        <name>substrate</name>
    </ligand>
</feature>
<evidence type="ECO:0000255" key="1">
    <source>
        <dbReference type="HAMAP-Rule" id="MF_01517"/>
    </source>
</evidence>
<reference key="1">
    <citation type="submission" date="2007-10" db="EMBL/GenBank/DDBJ databases">
        <title>Complete sequence of chromosome 2 of Burkholderia multivorans ATCC 17616.</title>
        <authorList>
            <person name="Copeland A."/>
            <person name="Lucas S."/>
            <person name="Lapidus A."/>
            <person name="Barry K."/>
            <person name="Glavina del Rio T."/>
            <person name="Dalin E."/>
            <person name="Tice H."/>
            <person name="Pitluck S."/>
            <person name="Chain P."/>
            <person name="Malfatti S."/>
            <person name="Shin M."/>
            <person name="Vergez L."/>
            <person name="Schmutz J."/>
            <person name="Larimer F."/>
            <person name="Land M."/>
            <person name="Hauser L."/>
            <person name="Kyrpides N."/>
            <person name="Kim E."/>
            <person name="Tiedje J."/>
            <person name="Richardson P."/>
        </authorList>
    </citation>
    <scope>NUCLEOTIDE SEQUENCE [LARGE SCALE GENOMIC DNA]</scope>
    <source>
        <strain>ATCC 17616 / 249</strain>
    </source>
</reference>
<reference key="2">
    <citation type="submission" date="2007-04" db="EMBL/GenBank/DDBJ databases">
        <title>Complete genome sequence of Burkholderia multivorans ATCC 17616.</title>
        <authorList>
            <person name="Ohtsubo Y."/>
            <person name="Yamashita A."/>
            <person name="Kurokawa K."/>
            <person name="Takami H."/>
            <person name="Yuhara S."/>
            <person name="Nishiyama E."/>
            <person name="Endo R."/>
            <person name="Miyazaki R."/>
            <person name="Ono A."/>
            <person name="Yano K."/>
            <person name="Ito M."/>
            <person name="Sota M."/>
            <person name="Yuji N."/>
            <person name="Hattori M."/>
            <person name="Tsuda M."/>
        </authorList>
    </citation>
    <scope>NUCLEOTIDE SEQUENCE [LARGE SCALE GENOMIC DNA]</scope>
    <source>
        <strain>ATCC 17616 / 249</strain>
    </source>
</reference>
<accession>A9AMD5</accession>
<protein>
    <recommendedName>
        <fullName evidence="1">Malate dehydrogenase</fullName>
        <ecNumber evidence="1">1.1.1.37</ecNumber>
    </recommendedName>
</protein>
<organism>
    <name type="scientific">Burkholderia multivorans (strain ATCC 17616 / 249)</name>
    <dbReference type="NCBI Taxonomy" id="395019"/>
    <lineage>
        <taxon>Bacteria</taxon>
        <taxon>Pseudomonadati</taxon>
        <taxon>Pseudomonadota</taxon>
        <taxon>Betaproteobacteria</taxon>
        <taxon>Burkholderiales</taxon>
        <taxon>Burkholderiaceae</taxon>
        <taxon>Burkholderia</taxon>
        <taxon>Burkholderia cepacia complex</taxon>
    </lineage>
</organism>